<evidence type="ECO:0000255" key="1">
    <source>
        <dbReference type="HAMAP-Rule" id="MF_00403"/>
    </source>
</evidence>
<evidence type="ECO:0000256" key="2">
    <source>
        <dbReference type="SAM" id="MobiDB-lite"/>
    </source>
</evidence>
<evidence type="ECO:0000305" key="3"/>
<dbReference type="EMBL" id="X57144">
    <property type="protein sequence ID" value="CAA40429.1"/>
    <property type="molecule type" value="Genomic_DNA"/>
</dbReference>
<dbReference type="EMBL" id="AM774415">
    <property type="protein sequence ID" value="CAP15000.1"/>
    <property type="molecule type" value="Genomic_DNA"/>
</dbReference>
<dbReference type="PIR" id="S03581">
    <property type="entry name" value="S03581"/>
</dbReference>
<dbReference type="RefSeq" id="WP_010903993.1">
    <property type="nucleotide sequence ID" value="NC_010364.1"/>
</dbReference>
<dbReference type="SMR" id="B0R8D1"/>
<dbReference type="EnsemblBacteria" id="CAP15000">
    <property type="protein sequence ID" value="CAP15000"/>
    <property type="gene ID" value="OE_4736R"/>
</dbReference>
<dbReference type="KEGG" id="hsl:OE_4736R"/>
<dbReference type="HOGENOM" id="CLU_115574_0_1_2"/>
<dbReference type="PhylomeDB" id="B0R8D1"/>
<dbReference type="Proteomes" id="UP000001321">
    <property type="component" value="Chromosome"/>
</dbReference>
<dbReference type="GO" id="GO:0015935">
    <property type="term" value="C:small ribosomal subunit"/>
    <property type="evidence" value="ECO:0007669"/>
    <property type="project" value="InterPro"/>
</dbReference>
<dbReference type="GO" id="GO:0019843">
    <property type="term" value="F:rRNA binding"/>
    <property type="evidence" value="ECO:0007669"/>
    <property type="project" value="UniProtKB-UniRule"/>
</dbReference>
<dbReference type="GO" id="GO:0003735">
    <property type="term" value="F:structural constituent of ribosome"/>
    <property type="evidence" value="ECO:0007669"/>
    <property type="project" value="InterPro"/>
</dbReference>
<dbReference type="GO" id="GO:0006412">
    <property type="term" value="P:translation"/>
    <property type="evidence" value="ECO:0007669"/>
    <property type="project" value="UniProtKB-UniRule"/>
</dbReference>
<dbReference type="CDD" id="cd03367">
    <property type="entry name" value="Ribosomal_S23"/>
    <property type="match status" value="1"/>
</dbReference>
<dbReference type="FunFam" id="2.40.50.140:FF:000007">
    <property type="entry name" value="40S ribosomal protein S23"/>
    <property type="match status" value="1"/>
</dbReference>
<dbReference type="Gene3D" id="2.40.50.140">
    <property type="entry name" value="Nucleic acid-binding proteins"/>
    <property type="match status" value="1"/>
</dbReference>
<dbReference type="HAMAP" id="MF_00403_A">
    <property type="entry name" value="Ribosomal_uS12_A"/>
    <property type="match status" value="1"/>
</dbReference>
<dbReference type="InterPro" id="IPR012340">
    <property type="entry name" value="NA-bd_OB-fold"/>
</dbReference>
<dbReference type="InterPro" id="IPR006032">
    <property type="entry name" value="Ribosomal_uS12"/>
</dbReference>
<dbReference type="InterPro" id="IPR022863">
    <property type="entry name" value="Ribosomal_uS12_arc"/>
</dbReference>
<dbReference type="InterPro" id="IPR005680">
    <property type="entry name" value="Ribosomal_uS12_euk/arc"/>
</dbReference>
<dbReference type="NCBIfam" id="NF003254">
    <property type="entry name" value="PRK04211.1"/>
    <property type="match status" value="1"/>
</dbReference>
<dbReference type="NCBIfam" id="TIGR00982">
    <property type="entry name" value="uS12_E_A"/>
    <property type="match status" value="1"/>
</dbReference>
<dbReference type="PANTHER" id="PTHR11652">
    <property type="entry name" value="30S RIBOSOMAL PROTEIN S12 FAMILY MEMBER"/>
    <property type="match status" value="1"/>
</dbReference>
<dbReference type="Pfam" id="PF00164">
    <property type="entry name" value="Ribosom_S12_S23"/>
    <property type="match status" value="1"/>
</dbReference>
<dbReference type="PIRSF" id="PIRSF002133">
    <property type="entry name" value="Ribosomal_S12/S23"/>
    <property type="match status" value="1"/>
</dbReference>
<dbReference type="SUPFAM" id="SSF50249">
    <property type="entry name" value="Nucleic acid-binding proteins"/>
    <property type="match status" value="1"/>
</dbReference>
<dbReference type="PROSITE" id="PS00055">
    <property type="entry name" value="RIBOSOMAL_S12"/>
    <property type="match status" value="1"/>
</dbReference>
<keyword id="KW-0687">Ribonucleoprotein</keyword>
<keyword id="KW-0689">Ribosomal protein</keyword>
<keyword id="KW-0694">RNA-binding</keyword>
<keyword id="KW-0699">rRNA-binding</keyword>
<comment type="function">
    <text evidence="1">With S4 and S5 plays an important role in translational accuracy. Located at the interface of the 30S and 50S subunits.</text>
</comment>
<comment type="subunit">
    <text evidence="1">Part of the 30S ribosomal subunit.</text>
</comment>
<comment type="similarity">
    <text evidence="1">Belongs to the universal ribosomal protein uS12 family.</text>
</comment>
<sequence length="142" mass="15489">MTNGKYAARKLKKDRQQRRWSDSEYARRERGLGKKSDPLEGAPQGRGIVLEKVGIEAKQPNSAIRKCVRVQLIKNGKQVTAFCPGDGAISFIDEHDEVTIAGIGGAKGRAMGDLSGVNYKVEKVNGVSLIELVRGNAEKPVR</sequence>
<reference key="1">
    <citation type="journal article" date="1989" name="J. Mol. Biol.">
        <title>Sequence, organization, transcription and evolution of RNA polymerase subunit genes from the archaebacterial extreme halophiles Halobacterium halobium and Halococcus morrhuae.</title>
        <authorList>
            <person name="Leffers H."/>
            <person name="Gropp F."/>
            <person name="Lottspeich F."/>
            <person name="Zillig W."/>
            <person name="Garrett R.A."/>
        </authorList>
    </citation>
    <scope>NUCLEOTIDE SEQUENCE [GENOMIC DNA]</scope>
    <source>
        <strain>ATCC 29341 / DSM 671 / R1</strain>
    </source>
</reference>
<reference key="2">
    <citation type="journal article" date="2008" name="Genomics">
        <title>Evolution in the laboratory: the genome of Halobacterium salinarum strain R1 compared to that of strain NRC-1.</title>
        <authorList>
            <person name="Pfeiffer F."/>
            <person name="Schuster S.C."/>
            <person name="Broicher A."/>
            <person name="Falb M."/>
            <person name="Palm P."/>
            <person name="Rodewald K."/>
            <person name="Ruepp A."/>
            <person name="Soppa J."/>
            <person name="Tittor J."/>
            <person name="Oesterhelt D."/>
        </authorList>
    </citation>
    <scope>NUCLEOTIDE SEQUENCE [LARGE SCALE GENOMIC DNA]</scope>
    <source>
        <strain>ATCC 29341 / DSM 671 / R1</strain>
    </source>
</reference>
<accession>B0R8D1</accession>
<accession>P15756</accession>
<accession>Q9HM82</accession>
<name>RS12_HALS3</name>
<feature type="chain" id="PRO_0000409669" description="Small ribosomal subunit protein uS12">
    <location>
        <begin position="1"/>
        <end position="142"/>
    </location>
</feature>
<feature type="region of interest" description="Disordered" evidence="2">
    <location>
        <begin position="1"/>
        <end position="44"/>
    </location>
</feature>
<feature type="compositionally biased region" description="Basic residues" evidence="2">
    <location>
        <begin position="7"/>
        <end position="16"/>
    </location>
</feature>
<feature type="compositionally biased region" description="Basic and acidic residues" evidence="2">
    <location>
        <begin position="17"/>
        <end position="38"/>
    </location>
</feature>
<protein>
    <recommendedName>
        <fullName evidence="1">Small ribosomal subunit protein uS12</fullName>
    </recommendedName>
    <alternativeName>
        <fullName evidence="3">30S ribosomal protein S12</fullName>
    </alternativeName>
    <alternativeName>
        <fullName>HmaS12</fullName>
    </alternativeName>
</protein>
<gene>
    <name evidence="1" type="primary">rps12</name>
    <name type="ordered locus">OE_4736R</name>
</gene>
<organism>
    <name type="scientific">Halobacterium salinarum (strain ATCC 29341 / DSM 671 / R1)</name>
    <dbReference type="NCBI Taxonomy" id="478009"/>
    <lineage>
        <taxon>Archaea</taxon>
        <taxon>Methanobacteriati</taxon>
        <taxon>Methanobacteriota</taxon>
        <taxon>Stenosarchaea group</taxon>
        <taxon>Halobacteria</taxon>
        <taxon>Halobacteriales</taxon>
        <taxon>Halobacteriaceae</taxon>
        <taxon>Halobacterium</taxon>
        <taxon>Halobacterium salinarum NRC-34001</taxon>
    </lineage>
</organism>
<proteinExistence type="inferred from homology"/>